<feature type="chain" id="PRO_0000325596" description="Dihydroorotase">
    <location>
        <begin position="1"/>
        <end position="439"/>
    </location>
</feature>
<feature type="active site" evidence="1">
    <location>
        <position position="318"/>
    </location>
</feature>
<feature type="binding site" evidence="1">
    <location>
        <position position="73"/>
    </location>
    <ligand>
        <name>Zn(2+)</name>
        <dbReference type="ChEBI" id="CHEBI:29105"/>
        <label>1</label>
    </ligand>
</feature>
<feature type="binding site" evidence="1">
    <location>
        <begin position="75"/>
        <end position="77"/>
    </location>
    <ligand>
        <name>substrate</name>
    </ligand>
</feature>
<feature type="binding site" evidence="1">
    <location>
        <position position="75"/>
    </location>
    <ligand>
        <name>Zn(2+)</name>
        <dbReference type="ChEBI" id="CHEBI:29105"/>
        <label>1</label>
    </ligand>
</feature>
<feature type="binding site" evidence="1">
    <location>
        <position position="107"/>
    </location>
    <ligand>
        <name>substrate</name>
    </ligand>
</feature>
<feature type="binding site" evidence="1">
    <location>
        <position position="165"/>
    </location>
    <ligand>
        <name>Zn(2+)</name>
        <dbReference type="ChEBI" id="CHEBI:29105"/>
        <label>1</label>
    </ligand>
</feature>
<feature type="binding site" evidence="1">
    <location>
        <position position="165"/>
    </location>
    <ligand>
        <name>Zn(2+)</name>
        <dbReference type="ChEBI" id="CHEBI:29105"/>
        <label>2</label>
    </ligand>
</feature>
<feature type="binding site" evidence="1">
    <location>
        <position position="192"/>
    </location>
    <ligand>
        <name>Zn(2+)</name>
        <dbReference type="ChEBI" id="CHEBI:29105"/>
        <label>2</label>
    </ligand>
</feature>
<feature type="binding site" evidence="1">
    <location>
        <position position="245"/>
    </location>
    <ligand>
        <name>Zn(2+)</name>
        <dbReference type="ChEBI" id="CHEBI:29105"/>
        <label>2</label>
    </ligand>
</feature>
<feature type="binding site" evidence="1">
    <location>
        <position position="291"/>
    </location>
    <ligand>
        <name>substrate</name>
    </ligand>
</feature>
<feature type="binding site" evidence="1">
    <location>
        <position position="318"/>
    </location>
    <ligand>
        <name>Zn(2+)</name>
        <dbReference type="ChEBI" id="CHEBI:29105"/>
        <label>1</label>
    </ligand>
</feature>
<feature type="binding site" evidence="1">
    <location>
        <position position="322"/>
    </location>
    <ligand>
        <name>substrate</name>
    </ligand>
</feature>
<comment type="function">
    <text evidence="1">Catalyzes the reversible cyclization of carbamoyl aspartate to dihydroorotate.</text>
</comment>
<comment type="catalytic activity">
    <reaction evidence="1">
        <text>(S)-dihydroorotate + H2O = N-carbamoyl-L-aspartate + H(+)</text>
        <dbReference type="Rhea" id="RHEA:24296"/>
        <dbReference type="ChEBI" id="CHEBI:15377"/>
        <dbReference type="ChEBI" id="CHEBI:15378"/>
        <dbReference type="ChEBI" id="CHEBI:30864"/>
        <dbReference type="ChEBI" id="CHEBI:32814"/>
        <dbReference type="EC" id="3.5.2.3"/>
    </reaction>
</comment>
<comment type="cofactor">
    <cofactor evidence="1">
        <name>Zn(2+)</name>
        <dbReference type="ChEBI" id="CHEBI:29105"/>
    </cofactor>
    <text evidence="1">Binds 2 Zn(2+) ions per subunit.</text>
</comment>
<comment type="pathway">
    <text evidence="1">Pyrimidine metabolism; UMP biosynthesis via de novo pathway; (S)-dihydroorotate from bicarbonate: step 3/3.</text>
</comment>
<comment type="similarity">
    <text evidence="1">Belongs to the metallo-dependent hydrolases superfamily. DHOase family. Class I DHOase subfamily.</text>
</comment>
<reference key="1">
    <citation type="submission" date="2006-10" db="EMBL/GenBank/DDBJ databases">
        <title>Complete sequence of Syntrophobacter fumaroxidans MPOB.</title>
        <authorList>
            <consortium name="US DOE Joint Genome Institute"/>
            <person name="Copeland A."/>
            <person name="Lucas S."/>
            <person name="Lapidus A."/>
            <person name="Barry K."/>
            <person name="Detter J.C."/>
            <person name="Glavina del Rio T."/>
            <person name="Hammon N."/>
            <person name="Israni S."/>
            <person name="Pitluck S."/>
            <person name="Goltsman E.G."/>
            <person name="Martinez M."/>
            <person name="Schmutz J."/>
            <person name="Larimer F."/>
            <person name="Land M."/>
            <person name="Hauser L."/>
            <person name="Kyrpides N."/>
            <person name="Kim E."/>
            <person name="Boone D.R."/>
            <person name="Brockman F."/>
            <person name="Culley D."/>
            <person name="Ferry J."/>
            <person name="Gunsalus R."/>
            <person name="McInerney M.J."/>
            <person name="Morrison M."/>
            <person name="Plugge C."/>
            <person name="Rohlin L."/>
            <person name="Scholten J."/>
            <person name="Sieber J."/>
            <person name="Stams A.J.M."/>
            <person name="Worm P."/>
            <person name="Henstra A.M."/>
            <person name="Richardson P."/>
        </authorList>
    </citation>
    <scope>NUCLEOTIDE SEQUENCE [LARGE SCALE GENOMIC DNA]</scope>
    <source>
        <strain>DSM 10017 / MPOB</strain>
    </source>
</reference>
<dbReference type="EC" id="3.5.2.3" evidence="1"/>
<dbReference type="EMBL" id="CP000478">
    <property type="protein sequence ID" value="ABK17774.1"/>
    <property type="molecule type" value="Genomic_DNA"/>
</dbReference>
<dbReference type="RefSeq" id="WP_011698943.1">
    <property type="nucleotide sequence ID" value="NC_008554.1"/>
</dbReference>
<dbReference type="SMR" id="A0LK22"/>
<dbReference type="FunCoup" id="A0LK22">
    <property type="interactions" value="494"/>
</dbReference>
<dbReference type="STRING" id="335543.Sfum_2091"/>
<dbReference type="KEGG" id="sfu:Sfum_2091"/>
<dbReference type="eggNOG" id="COG0044">
    <property type="taxonomic scope" value="Bacteria"/>
</dbReference>
<dbReference type="HOGENOM" id="CLU_015572_1_0_7"/>
<dbReference type="InParanoid" id="A0LK22"/>
<dbReference type="OrthoDB" id="9803027at2"/>
<dbReference type="UniPathway" id="UPA00070">
    <property type="reaction ID" value="UER00117"/>
</dbReference>
<dbReference type="Proteomes" id="UP000001784">
    <property type="component" value="Chromosome"/>
</dbReference>
<dbReference type="GO" id="GO:0005737">
    <property type="term" value="C:cytoplasm"/>
    <property type="evidence" value="ECO:0007669"/>
    <property type="project" value="TreeGrafter"/>
</dbReference>
<dbReference type="GO" id="GO:0004038">
    <property type="term" value="F:allantoinase activity"/>
    <property type="evidence" value="ECO:0007669"/>
    <property type="project" value="TreeGrafter"/>
</dbReference>
<dbReference type="GO" id="GO:0004151">
    <property type="term" value="F:dihydroorotase activity"/>
    <property type="evidence" value="ECO:0007669"/>
    <property type="project" value="UniProtKB-UniRule"/>
</dbReference>
<dbReference type="GO" id="GO:0008270">
    <property type="term" value="F:zinc ion binding"/>
    <property type="evidence" value="ECO:0007669"/>
    <property type="project" value="UniProtKB-UniRule"/>
</dbReference>
<dbReference type="GO" id="GO:0044205">
    <property type="term" value="P:'de novo' UMP biosynthetic process"/>
    <property type="evidence" value="ECO:0007669"/>
    <property type="project" value="UniProtKB-UniRule"/>
</dbReference>
<dbReference type="GO" id="GO:0006145">
    <property type="term" value="P:purine nucleobase catabolic process"/>
    <property type="evidence" value="ECO:0007669"/>
    <property type="project" value="TreeGrafter"/>
</dbReference>
<dbReference type="CDD" id="cd01317">
    <property type="entry name" value="DHOase_IIa"/>
    <property type="match status" value="1"/>
</dbReference>
<dbReference type="Gene3D" id="3.20.20.140">
    <property type="entry name" value="Metal-dependent hydrolases"/>
    <property type="match status" value="1"/>
</dbReference>
<dbReference type="Gene3D" id="2.30.40.10">
    <property type="entry name" value="Urease, subunit C, domain 1"/>
    <property type="match status" value="1"/>
</dbReference>
<dbReference type="HAMAP" id="MF_00220_B">
    <property type="entry name" value="PyrC_classI_B"/>
    <property type="match status" value="1"/>
</dbReference>
<dbReference type="InterPro" id="IPR006680">
    <property type="entry name" value="Amidohydro-rel"/>
</dbReference>
<dbReference type="InterPro" id="IPR004722">
    <property type="entry name" value="DHOase"/>
</dbReference>
<dbReference type="InterPro" id="IPR050138">
    <property type="entry name" value="DHOase/Allantoinase_Hydrolase"/>
</dbReference>
<dbReference type="InterPro" id="IPR002195">
    <property type="entry name" value="Dihydroorotase_CS"/>
</dbReference>
<dbReference type="InterPro" id="IPR011059">
    <property type="entry name" value="Metal-dep_hydrolase_composite"/>
</dbReference>
<dbReference type="InterPro" id="IPR032466">
    <property type="entry name" value="Metal_Hydrolase"/>
</dbReference>
<dbReference type="NCBIfam" id="TIGR00857">
    <property type="entry name" value="pyrC_multi"/>
    <property type="match status" value="1"/>
</dbReference>
<dbReference type="PANTHER" id="PTHR43668">
    <property type="entry name" value="ALLANTOINASE"/>
    <property type="match status" value="1"/>
</dbReference>
<dbReference type="PANTHER" id="PTHR43668:SF2">
    <property type="entry name" value="ALLANTOINASE"/>
    <property type="match status" value="1"/>
</dbReference>
<dbReference type="Pfam" id="PF01979">
    <property type="entry name" value="Amidohydro_1"/>
    <property type="match status" value="1"/>
</dbReference>
<dbReference type="SUPFAM" id="SSF51338">
    <property type="entry name" value="Composite domain of metallo-dependent hydrolases"/>
    <property type="match status" value="1"/>
</dbReference>
<dbReference type="SUPFAM" id="SSF51556">
    <property type="entry name" value="Metallo-dependent hydrolases"/>
    <property type="match status" value="1"/>
</dbReference>
<dbReference type="PROSITE" id="PS00482">
    <property type="entry name" value="DIHYDROOROTASE_1"/>
    <property type="match status" value="1"/>
</dbReference>
<dbReference type="PROSITE" id="PS00483">
    <property type="entry name" value="DIHYDROOROTASE_2"/>
    <property type="match status" value="1"/>
</dbReference>
<protein>
    <recommendedName>
        <fullName evidence="1">Dihydroorotase</fullName>
        <shortName evidence="1">DHOase</shortName>
        <ecNumber evidence="1">3.5.2.3</ecNumber>
    </recommendedName>
</protein>
<name>PYRC_SYNFM</name>
<sequence>MKKGKADPCNYLFRRARVIDPARDLDAVADVLVVDGILTDIKPNIDLPSDRLAHFAVIDASEKWIVPGLIDMHVHLREPGEEYKETIATGTMAAVAGGYTAVACMPNTKPVNDCAAVTEYILERAREQGHCRVLPVGAVSSGLEGRSLAEFGELKGSGAVAVTDDGRPVANSMLMRRALEYAKNFDLPVISHAEDPALSEGGLMNEGPTSTLLGLHGIPKAAEEVMVARDLALAELTGARLHIAHVSTAGAVRMIGEAKSRGVPVTAETAPHYFTLTDDRLMTFDTLYKVNPPIRGPADVEAIKRGLADGTIDAVATDHAPHSSIEKDTEFEYAANGIIGLESALPLILELVREKTLTPSQAVAKVSCNPARILGLPLGTLLLNQRACMTYLDPEFYFVLDCTTFRSKSRNCPFHGQPTRGRALMTFFNGKVAFSRLSK</sequence>
<keyword id="KW-0378">Hydrolase</keyword>
<keyword id="KW-0479">Metal-binding</keyword>
<keyword id="KW-0665">Pyrimidine biosynthesis</keyword>
<keyword id="KW-1185">Reference proteome</keyword>
<keyword id="KW-0862">Zinc</keyword>
<organism>
    <name type="scientific">Syntrophobacter fumaroxidans (strain DSM 10017 / MPOB)</name>
    <dbReference type="NCBI Taxonomy" id="335543"/>
    <lineage>
        <taxon>Bacteria</taxon>
        <taxon>Pseudomonadati</taxon>
        <taxon>Thermodesulfobacteriota</taxon>
        <taxon>Syntrophobacteria</taxon>
        <taxon>Syntrophobacterales</taxon>
        <taxon>Syntrophobacteraceae</taxon>
        <taxon>Syntrophobacter</taxon>
    </lineage>
</organism>
<evidence type="ECO:0000255" key="1">
    <source>
        <dbReference type="HAMAP-Rule" id="MF_00220"/>
    </source>
</evidence>
<gene>
    <name evidence="1" type="primary">pyrC</name>
    <name type="ordered locus">Sfum_2091</name>
</gene>
<accession>A0LK22</accession>
<proteinExistence type="inferred from homology"/>